<reference key="1">
    <citation type="journal article" date="1996" name="Science">
        <title>Complete genome sequence of the methanogenic archaeon, Methanococcus jannaschii.</title>
        <authorList>
            <person name="Bult C.J."/>
            <person name="White O."/>
            <person name="Olsen G.J."/>
            <person name="Zhou L."/>
            <person name="Fleischmann R.D."/>
            <person name="Sutton G.G."/>
            <person name="Blake J.A."/>
            <person name="FitzGerald L.M."/>
            <person name="Clayton R.A."/>
            <person name="Gocayne J.D."/>
            <person name="Kerlavage A.R."/>
            <person name="Dougherty B.A."/>
            <person name="Tomb J.-F."/>
            <person name="Adams M.D."/>
            <person name="Reich C.I."/>
            <person name="Overbeek R."/>
            <person name="Kirkness E.F."/>
            <person name="Weinstock K.G."/>
            <person name="Merrick J.M."/>
            <person name="Glodek A."/>
            <person name="Scott J.L."/>
            <person name="Geoghagen N.S.M."/>
            <person name="Weidman J.F."/>
            <person name="Fuhrmann J.L."/>
            <person name="Nguyen D."/>
            <person name="Utterback T.R."/>
            <person name="Kelley J.M."/>
            <person name="Peterson J.D."/>
            <person name="Sadow P.W."/>
            <person name="Hanna M.C."/>
            <person name="Cotton M.D."/>
            <person name="Roberts K.M."/>
            <person name="Hurst M.A."/>
            <person name="Kaine B.P."/>
            <person name="Borodovsky M."/>
            <person name="Klenk H.-P."/>
            <person name="Fraser C.M."/>
            <person name="Smith H.O."/>
            <person name="Woese C.R."/>
            <person name="Venter J.C."/>
        </authorList>
    </citation>
    <scope>NUCLEOTIDE SEQUENCE [LARGE SCALE GENOMIC DNA]</scope>
    <source>
        <strain>ATCC 43067 / DSM 2661 / JAL-1 / JCM 10045 / NBRC 100440</strain>
    </source>
</reference>
<gene>
    <name type="ordered locus">MJ0165</name>
</gene>
<proteinExistence type="predicted"/>
<protein>
    <recommendedName>
        <fullName>Uncharacterized protein MJ0165</fullName>
    </recommendedName>
</protein>
<sequence length="256" mass="28107">MGKNLRDLLLAFKNGDISLDEIEKQIKLNYYEEIEERLKLDINRQFRTGVPEVVYGKGKDIDEIIKATLKLVEKNGIALATKIEDIEKLSDEIRKWNLKNYDIKINKKAKTLIIKNKNYEVKKIGKVGILTAGTSDIPVAEEAKDTLEIMGVEAITAYDVGIAGIHRLFPALKRMIEEDVCCIIVVAGMEGALPSVIASMVDIPVIGVPTSTSYGIKITPLLTMLHSCSPGIAVVNIDNGFGAGVFAGLIAKIMHK</sequence>
<dbReference type="EMBL" id="L77117">
    <property type="protein sequence ID" value="AAB98147.1"/>
    <property type="molecule type" value="Genomic_DNA"/>
</dbReference>
<dbReference type="PIR" id="F64320">
    <property type="entry name" value="F64320"/>
</dbReference>
<dbReference type="RefSeq" id="WP_010869660.1">
    <property type="nucleotide sequence ID" value="NC_000909.1"/>
</dbReference>
<dbReference type="SMR" id="Q57629"/>
<dbReference type="FunCoup" id="Q57629">
    <property type="interactions" value="2"/>
</dbReference>
<dbReference type="STRING" id="243232.MJ_0165"/>
<dbReference type="PaxDb" id="243232-MJ_0165"/>
<dbReference type="EnsemblBacteria" id="AAB98147">
    <property type="protein sequence ID" value="AAB98147"/>
    <property type="gene ID" value="MJ_0165"/>
</dbReference>
<dbReference type="GeneID" id="1451012"/>
<dbReference type="KEGG" id="mja:MJ_0165"/>
<dbReference type="eggNOG" id="arCOG02465">
    <property type="taxonomic scope" value="Archaea"/>
</dbReference>
<dbReference type="HOGENOM" id="CLU_065705_0_0_2"/>
<dbReference type="InParanoid" id="Q57629"/>
<dbReference type="OrthoDB" id="372165at2157"/>
<dbReference type="PhylomeDB" id="Q57629"/>
<dbReference type="Proteomes" id="UP000000805">
    <property type="component" value="Chromosome"/>
</dbReference>
<dbReference type="GO" id="GO:0005886">
    <property type="term" value="C:plasma membrane"/>
    <property type="evidence" value="ECO:0007669"/>
    <property type="project" value="UniProtKB-SubCell"/>
</dbReference>
<dbReference type="GO" id="GO:0016787">
    <property type="term" value="F:hydrolase activity"/>
    <property type="evidence" value="ECO:0007669"/>
    <property type="project" value="InterPro"/>
</dbReference>
<dbReference type="GO" id="GO:0006189">
    <property type="term" value="P:'de novo' IMP biosynthetic process"/>
    <property type="evidence" value="ECO:0007669"/>
    <property type="project" value="InterPro"/>
</dbReference>
<dbReference type="Gene3D" id="3.40.50.1970">
    <property type="match status" value="1"/>
</dbReference>
<dbReference type="InterPro" id="IPR039476">
    <property type="entry name" value="P2CMN_synthase_LarB"/>
</dbReference>
<dbReference type="InterPro" id="IPR000031">
    <property type="entry name" value="PurE_dom"/>
</dbReference>
<dbReference type="NCBIfam" id="NF033503">
    <property type="entry name" value="LarB"/>
    <property type="match status" value="1"/>
</dbReference>
<dbReference type="PANTHER" id="PTHR43064">
    <property type="entry name" value="PHOSPHORIBOSYLAMINOIMIDAZOLE CARBOXYLASE-RELATED"/>
    <property type="match status" value="1"/>
</dbReference>
<dbReference type="PANTHER" id="PTHR43064:SF1">
    <property type="entry name" value="SLL1489 PROTEIN"/>
    <property type="match status" value="1"/>
</dbReference>
<dbReference type="Pfam" id="PF00731">
    <property type="entry name" value="AIRC"/>
    <property type="match status" value="1"/>
</dbReference>
<dbReference type="SMART" id="SM01001">
    <property type="entry name" value="AIRC"/>
    <property type="match status" value="1"/>
</dbReference>
<dbReference type="SUPFAM" id="SSF52255">
    <property type="entry name" value="N5-CAIR mutase (phosphoribosylaminoimidazole carboxylase, PurE)"/>
    <property type="match status" value="1"/>
</dbReference>
<organism>
    <name type="scientific">Methanocaldococcus jannaschii (strain ATCC 43067 / DSM 2661 / JAL-1 / JCM 10045 / NBRC 100440)</name>
    <name type="common">Methanococcus jannaschii</name>
    <dbReference type="NCBI Taxonomy" id="243232"/>
    <lineage>
        <taxon>Archaea</taxon>
        <taxon>Methanobacteriati</taxon>
        <taxon>Methanobacteriota</taxon>
        <taxon>Methanomada group</taxon>
        <taxon>Methanococci</taxon>
        <taxon>Methanococcales</taxon>
        <taxon>Methanocaldococcaceae</taxon>
        <taxon>Methanocaldococcus</taxon>
    </lineage>
</organism>
<evidence type="ECO:0000255" key="1"/>
<evidence type="ECO:0000305" key="2"/>
<keyword id="KW-1003">Cell membrane</keyword>
<keyword id="KW-0472">Membrane</keyword>
<keyword id="KW-1185">Reference proteome</keyword>
<keyword id="KW-0812">Transmembrane</keyword>
<keyword id="KW-1133">Transmembrane helix</keyword>
<comment type="subcellular location">
    <subcellularLocation>
        <location evidence="2">Cell membrane</location>
        <topology evidence="2">Multi-pass membrane protein</topology>
    </subcellularLocation>
</comment>
<accession>Q57629</accession>
<feature type="chain" id="PRO_0000106727" description="Uncharacterized protein MJ0165">
    <location>
        <begin position="1"/>
        <end position="256"/>
    </location>
</feature>
<feature type="transmembrane region" description="Helical" evidence="1">
    <location>
        <begin position="181"/>
        <end position="201"/>
    </location>
</feature>
<feature type="transmembrane region" description="Helical" evidence="1">
    <location>
        <begin position="231"/>
        <end position="251"/>
    </location>
</feature>
<name>Y165_METJA</name>